<accession>Q9GKQ8</accession>
<name>DSG1_CANLF</name>
<sequence>MNWHFLRTATVLLIFLVVVEINSEFRIQVRDYNTKNGTIKWHSIRRQKREWIKFAAACREGEDNSKRNPIAKIHSDCAANQQVTYRISGVGIDQPPYGIFIINQKTGEINITSIVDREITPFFIIYCRALNSLGQDLERPLELRVRVLDINDNPPVFSMSTFVGQIEENSNANTLVMRLNATGADEPNNLNSKIAFKIIRQEPSDSPMFIINRNTGEIRTMNNFLDREQYSQYSLAVRGSDRDGGADGMSAECECNIKILDVNDNIPYMEPSSHMVRIEENALSQNLVEIRVIDLDEEFSANWMAVIFFISGNEGGWFDIEMNERTNVGILKVIKPLDYEAVQNLQLSLGVRNKADFHHSIMSQYKVTATAISVTVLNVIEGSVFRPGSKTYVVRSDMGQNYKVGDFVATDLDTGLASTTVRYVMGNNPANLLNVDSKTGVITLRNKVTMEQYEMLNGKYQGTILSIDDALQRTCTGTINIDLQGSGWEKDSEKVTSSQNSGSSTGDSSGGTGGGGRENPSEGDTTTNTGGKTSTDYEDGETQTQSNNNHQELGSNNLSDNVHFGPAGIGLLIMGFLVLGLVPFLLMCCDCGGAPGAGAGFEPVPECSDGAIHSWAVEGPQPLPTDATTVCVPPIPSNNANVIECIDTSGVYTNEYGGREMQDLGGGERTTGFELTEGVKTSGVPEICQEYSGTLRRNSMRECREGGLNMNFMESYFCQKAYAYADEDEGRPSNDCLLIYDIEGVGSPAGSVGCCSFIGEDLDDSFLDTLGPKFKKLADISLGKEVEPDPSWPPESTEPICPQQGTEPIIGGHPPISPHFGTTTVISENTYPSGPGVQHPMPIPDPLGYGNVTVTESYTTSGTLKPTVHVHDNRHASNVVVTERVVGPISGTDLHGMLEMPDLRDGSNVIVTERVIAPSSSLPTSLTMPDPRESSNVVVTERVIRPASGMMGNLSIHPELSNAQNVIVTERVVSGSGISGISGLVGSAMGVSGGGMAMNSLGGGGGLSSSMGGTATIGHVRSSSDHHFSQTLGSASPSTARSRITKYSTVQYTK</sequence>
<proteinExistence type="evidence at transcript level"/>
<organism>
    <name type="scientific">Canis lupus familiaris</name>
    <name type="common">Dog</name>
    <name type="synonym">Canis familiaris</name>
    <dbReference type="NCBI Taxonomy" id="9615"/>
    <lineage>
        <taxon>Eukaryota</taxon>
        <taxon>Metazoa</taxon>
        <taxon>Chordata</taxon>
        <taxon>Craniata</taxon>
        <taxon>Vertebrata</taxon>
        <taxon>Euteleostomi</taxon>
        <taxon>Mammalia</taxon>
        <taxon>Eutheria</taxon>
        <taxon>Laurasiatheria</taxon>
        <taxon>Carnivora</taxon>
        <taxon>Caniformia</taxon>
        <taxon>Canidae</taxon>
        <taxon>Canis</taxon>
    </lineage>
</organism>
<keyword id="KW-0106">Calcium</keyword>
<keyword id="KW-0130">Cell adhesion</keyword>
<keyword id="KW-0965">Cell junction</keyword>
<keyword id="KW-1003">Cell membrane</keyword>
<keyword id="KW-0165">Cleavage on pair of basic residues</keyword>
<keyword id="KW-0963">Cytoplasm</keyword>
<keyword id="KW-0325">Glycoprotein</keyword>
<keyword id="KW-0472">Membrane</keyword>
<keyword id="KW-0479">Metal-binding</keyword>
<keyword id="KW-0539">Nucleus</keyword>
<keyword id="KW-1185">Reference proteome</keyword>
<keyword id="KW-0677">Repeat</keyword>
<keyword id="KW-0732">Signal</keyword>
<keyword id="KW-0812">Transmembrane</keyword>
<keyword id="KW-1133">Transmembrane helix</keyword>
<protein>
    <recommendedName>
        <fullName>Desmoglein-1</fullName>
    </recommendedName>
    <alternativeName>
        <fullName>Desmosomal glycoprotein 1</fullName>
        <shortName>DG1</shortName>
        <shortName>DGI</shortName>
    </alternativeName>
</protein>
<comment type="function">
    <text evidence="2">Component of intercellular desmosome junctions (By similarity). Involved in the interaction of plaque proteins and intermediate filaments mediating cell-cell adhesion (By similarity).</text>
</comment>
<comment type="subunit">
    <text evidence="2">Binds to JUP/plakoglobin (By similarity). Interacts with PKP2 (By similarity). Interacts with DSC3; there is evidence to suggest that the interaction promotes cell-cell adhesion of keratinocytes (By similarity).</text>
</comment>
<comment type="subcellular location">
    <subcellularLocation>
        <location evidence="3">Cell membrane</location>
        <topology evidence="3">Single-pass type I membrane protein</topology>
    </subcellularLocation>
    <subcellularLocation>
        <location evidence="3">Cell junction</location>
        <location evidence="3">Desmosome</location>
    </subcellularLocation>
    <subcellularLocation>
        <location evidence="2">Cytoplasm</location>
    </subcellularLocation>
    <subcellularLocation>
        <location evidence="2">Nucleus</location>
    </subcellularLocation>
</comment>
<comment type="domain">
    <text evidence="1">Three calcium ions are usually bound at the interface of each cadherin domain and rigidify the connections, imparting a strong curvature to the full-length ectodomain.</text>
</comment>
<feature type="signal peptide" evidence="4">
    <location>
        <begin position="1"/>
        <end position="23"/>
    </location>
</feature>
<feature type="propeptide" id="PRO_0000003835" evidence="4">
    <location>
        <begin position="24"/>
        <end position="49"/>
    </location>
</feature>
<feature type="chain" id="PRO_0000003836" description="Desmoglein-1">
    <location>
        <begin position="50"/>
        <end position="1054"/>
    </location>
</feature>
<feature type="topological domain" description="Extracellular" evidence="4">
    <location>
        <begin position="50"/>
        <end position="566"/>
    </location>
</feature>
<feature type="transmembrane region" description="Helical" evidence="4">
    <location>
        <begin position="567"/>
        <end position="587"/>
    </location>
</feature>
<feature type="topological domain" description="Cytoplasmic" evidence="4">
    <location>
        <begin position="588"/>
        <end position="1054"/>
    </location>
</feature>
<feature type="domain" description="Cadherin 1" evidence="5">
    <location>
        <begin position="50"/>
        <end position="157"/>
    </location>
</feature>
<feature type="domain" description="Cadherin 2" evidence="5">
    <location>
        <begin position="158"/>
        <end position="269"/>
    </location>
</feature>
<feature type="domain" description="Cadherin 3" evidence="5">
    <location>
        <begin position="270"/>
        <end position="389"/>
    </location>
</feature>
<feature type="domain" description="Cadherin 4" evidence="5">
    <location>
        <begin position="386"/>
        <end position="493"/>
    </location>
</feature>
<feature type="repeat" description="Desmoglein repeat 1">
    <location>
        <begin position="830"/>
        <end position="856"/>
    </location>
</feature>
<feature type="repeat" description="Desmoglein repeat 2">
    <location>
        <begin position="857"/>
        <end position="886"/>
    </location>
</feature>
<feature type="repeat" description="Desmoglein repeat 3">
    <location>
        <begin position="887"/>
        <end position="916"/>
    </location>
</feature>
<feature type="repeat" description="Desmoglein repeat 4">
    <location>
        <begin position="917"/>
        <end position="944"/>
    </location>
</feature>
<feature type="repeat" description="Desmoglein repeat 5">
    <location>
        <begin position="945"/>
        <end position="973"/>
    </location>
</feature>
<feature type="region of interest" description="Disordered" evidence="6">
    <location>
        <begin position="487"/>
        <end position="554"/>
    </location>
</feature>
<feature type="region of interest" description="Disordered" evidence="6">
    <location>
        <begin position="1018"/>
        <end position="1040"/>
    </location>
</feature>
<feature type="compositionally biased region" description="Low complexity" evidence="6">
    <location>
        <begin position="496"/>
        <end position="507"/>
    </location>
</feature>
<feature type="compositionally biased region" description="Gly residues" evidence="6">
    <location>
        <begin position="508"/>
        <end position="517"/>
    </location>
</feature>
<feature type="compositionally biased region" description="Low complexity" evidence="6">
    <location>
        <begin position="523"/>
        <end position="534"/>
    </location>
</feature>
<feature type="compositionally biased region" description="Polar residues" evidence="6">
    <location>
        <begin position="542"/>
        <end position="554"/>
    </location>
</feature>
<feature type="compositionally biased region" description="Polar residues" evidence="6">
    <location>
        <begin position="1029"/>
        <end position="1040"/>
    </location>
</feature>
<feature type="glycosylation site" description="N-linked (GlcNAc...) asparagine" evidence="4">
    <location>
        <position position="36"/>
    </location>
</feature>
<feature type="glycosylation site" description="N-linked (GlcNAc...) asparagine" evidence="4">
    <location>
        <position position="110"/>
    </location>
</feature>
<feature type="glycosylation site" description="N-linked (GlcNAc...) asparagine" evidence="4">
    <location>
        <position position="180"/>
    </location>
</feature>
<feature type="glycosylation site" description="N-linked (GlcNAc...) asparagine" evidence="4">
    <location>
        <position position="557"/>
    </location>
</feature>
<evidence type="ECO:0000250" key="1"/>
<evidence type="ECO:0000250" key="2">
    <source>
        <dbReference type="UniProtKB" id="Q02413"/>
    </source>
</evidence>
<evidence type="ECO:0000250" key="3">
    <source>
        <dbReference type="UniProtKB" id="Q7TSF1"/>
    </source>
</evidence>
<evidence type="ECO:0000255" key="4"/>
<evidence type="ECO:0000255" key="5">
    <source>
        <dbReference type="PROSITE-ProRule" id="PRU00043"/>
    </source>
</evidence>
<evidence type="ECO:0000256" key="6">
    <source>
        <dbReference type="SAM" id="MobiDB-lite"/>
    </source>
</evidence>
<reference key="1">
    <citation type="journal article" date="2000" name="J. Invest. Dermatol.">
        <title>Cloning of canine Dsg1 and evidence for alternative polyadenylation.</title>
        <authorList>
            <person name="Muller E."/>
            <person name="Caldelari R."/>
            <person name="Levine R."/>
            <person name="Kaplan S."/>
            <person name="Baron A."/>
            <person name="Rohrbach B."/>
            <person name="Wyder M."/>
            <person name="Balmer V."/>
            <person name="Suter M.M."/>
        </authorList>
    </citation>
    <scope>NUCLEOTIDE SEQUENCE [MRNA]</scope>
    <source>
        <tissue>Lip</tissue>
    </source>
</reference>
<dbReference type="EMBL" id="AF005360">
    <property type="protein sequence ID" value="AAD01241.1"/>
    <property type="molecule type" value="mRNA"/>
</dbReference>
<dbReference type="RefSeq" id="NP_001002939.1">
    <property type="nucleotide sequence ID" value="NM_001002939.1"/>
</dbReference>
<dbReference type="SMR" id="Q9GKQ8"/>
<dbReference type="FunCoup" id="Q9GKQ8">
    <property type="interactions" value="104"/>
</dbReference>
<dbReference type="GlyCosmos" id="Q9GKQ8">
    <property type="glycosylation" value="4 sites, No reported glycans"/>
</dbReference>
<dbReference type="PaxDb" id="9612-ENSCAFP00000031230"/>
<dbReference type="GeneID" id="403401"/>
<dbReference type="KEGG" id="cfa:403401"/>
<dbReference type="CTD" id="1828"/>
<dbReference type="eggNOG" id="KOG3594">
    <property type="taxonomic scope" value="Eukaryota"/>
</dbReference>
<dbReference type="InParanoid" id="Q9GKQ8"/>
<dbReference type="OrthoDB" id="8961010at2759"/>
<dbReference type="Proteomes" id="UP000002254">
    <property type="component" value="Unplaced"/>
</dbReference>
<dbReference type="Proteomes" id="UP000694429">
    <property type="component" value="Unplaced"/>
</dbReference>
<dbReference type="Proteomes" id="UP000694542">
    <property type="component" value="Unplaced"/>
</dbReference>
<dbReference type="Proteomes" id="UP000805418">
    <property type="component" value="Unplaced"/>
</dbReference>
<dbReference type="GO" id="GO:0005737">
    <property type="term" value="C:cytoplasm"/>
    <property type="evidence" value="ECO:0007669"/>
    <property type="project" value="UniProtKB-SubCell"/>
</dbReference>
<dbReference type="GO" id="GO:0030057">
    <property type="term" value="C:desmosome"/>
    <property type="evidence" value="ECO:0000318"/>
    <property type="project" value="GO_Central"/>
</dbReference>
<dbReference type="GO" id="GO:0005634">
    <property type="term" value="C:nucleus"/>
    <property type="evidence" value="ECO:0007669"/>
    <property type="project" value="UniProtKB-SubCell"/>
</dbReference>
<dbReference type="GO" id="GO:0005886">
    <property type="term" value="C:plasma membrane"/>
    <property type="evidence" value="ECO:0007669"/>
    <property type="project" value="UniProtKB-SubCell"/>
</dbReference>
<dbReference type="GO" id="GO:0005509">
    <property type="term" value="F:calcium ion binding"/>
    <property type="evidence" value="ECO:0000318"/>
    <property type="project" value="GO_Central"/>
</dbReference>
<dbReference type="GO" id="GO:0045295">
    <property type="term" value="F:gamma-catenin binding"/>
    <property type="evidence" value="ECO:0000318"/>
    <property type="project" value="GO_Central"/>
</dbReference>
<dbReference type="GO" id="GO:0098609">
    <property type="term" value="P:cell-cell adhesion"/>
    <property type="evidence" value="ECO:0000318"/>
    <property type="project" value="GO_Central"/>
</dbReference>
<dbReference type="GO" id="GO:0007156">
    <property type="term" value="P:homophilic cell adhesion via plasma membrane adhesion molecules"/>
    <property type="evidence" value="ECO:0007669"/>
    <property type="project" value="InterPro"/>
</dbReference>
<dbReference type="CDD" id="cd11304">
    <property type="entry name" value="Cadherin_repeat"/>
    <property type="match status" value="4"/>
</dbReference>
<dbReference type="FunFam" id="2.60.40.60:FF:000011">
    <property type="entry name" value="Cadherin 1"/>
    <property type="match status" value="1"/>
</dbReference>
<dbReference type="FunFam" id="2.60.40.60:FF:000068">
    <property type="entry name" value="Desmoglein 1"/>
    <property type="match status" value="1"/>
</dbReference>
<dbReference type="FunFam" id="2.60.40.60:FF:000083">
    <property type="entry name" value="Desmoglein 1"/>
    <property type="match status" value="1"/>
</dbReference>
<dbReference type="FunFam" id="2.60.40.60:FF:000238">
    <property type="entry name" value="Desmoglein 1"/>
    <property type="match status" value="1"/>
</dbReference>
<dbReference type="FunFam" id="4.10.900.10:FF:000003">
    <property type="entry name" value="Desmoglein 1"/>
    <property type="match status" value="1"/>
</dbReference>
<dbReference type="Gene3D" id="2.60.40.60">
    <property type="entry name" value="Cadherins"/>
    <property type="match status" value="4"/>
</dbReference>
<dbReference type="Gene3D" id="4.10.900.10">
    <property type="entry name" value="TCF3-CBD (Catenin binding domain)"/>
    <property type="match status" value="1"/>
</dbReference>
<dbReference type="InterPro" id="IPR050971">
    <property type="entry name" value="Cadherin-domain_protein"/>
</dbReference>
<dbReference type="InterPro" id="IPR002126">
    <property type="entry name" value="Cadherin-like_dom"/>
</dbReference>
<dbReference type="InterPro" id="IPR015919">
    <property type="entry name" value="Cadherin-like_sf"/>
</dbReference>
<dbReference type="InterPro" id="IPR020894">
    <property type="entry name" value="Cadherin_CS"/>
</dbReference>
<dbReference type="InterPro" id="IPR000233">
    <property type="entry name" value="Cadherin_Y-type_LIR"/>
</dbReference>
<dbReference type="InterPro" id="IPR027397">
    <property type="entry name" value="Catenin-bd_sf"/>
</dbReference>
<dbReference type="InterPro" id="IPR009122">
    <property type="entry name" value="Desmosomal_cadherin"/>
</dbReference>
<dbReference type="PANTHER" id="PTHR24025">
    <property type="entry name" value="DESMOGLEIN FAMILY MEMBER"/>
    <property type="match status" value="1"/>
</dbReference>
<dbReference type="PANTHER" id="PTHR24025:SF9">
    <property type="entry name" value="DESMOGLEIN-1"/>
    <property type="match status" value="1"/>
</dbReference>
<dbReference type="Pfam" id="PF01049">
    <property type="entry name" value="CADH_Y-type_LIR"/>
    <property type="match status" value="1"/>
</dbReference>
<dbReference type="Pfam" id="PF00028">
    <property type="entry name" value="Cadherin"/>
    <property type="match status" value="3"/>
</dbReference>
<dbReference type="PRINTS" id="PR00205">
    <property type="entry name" value="CADHERIN"/>
</dbReference>
<dbReference type="PRINTS" id="PR01818">
    <property type="entry name" value="DESMOCADHERN"/>
</dbReference>
<dbReference type="PRINTS" id="PR01819">
    <property type="entry name" value="DESMOGLEIN"/>
</dbReference>
<dbReference type="SMART" id="SM00112">
    <property type="entry name" value="CA"/>
    <property type="match status" value="4"/>
</dbReference>
<dbReference type="SUPFAM" id="SSF49313">
    <property type="entry name" value="Cadherin-like"/>
    <property type="match status" value="4"/>
</dbReference>
<dbReference type="PROSITE" id="PS00232">
    <property type="entry name" value="CADHERIN_1"/>
    <property type="match status" value="2"/>
</dbReference>
<dbReference type="PROSITE" id="PS50268">
    <property type="entry name" value="CADHERIN_2"/>
    <property type="match status" value="4"/>
</dbReference>
<gene>
    <name type="primary">DSG1</name>
</gene>